<name>RL24_LACLM</name>
<proteinExistence type="evidence at protein level"/>
<feature type="chain" id="PRO_1000052237" description="Large ribosomal subunit protein uL24">
    <location>
        <begin position="1"/>
        <end position="101"/>
    </location>
</feature>
<comment type="function">
    <text evidence="1">One of two assembly initiator proteins, it binds directly to the 5'-end of the 23S rRNA, where it nucleates assembly of the 50S subunit.</text>
</comment>
<comment type="function">
    <text evidence="1">One of the proteins that surrounds the polypeptide exit tunnel on the outside of the subunit.</text>
</comment>
<comment type="subunit">
    <text evidence="1">Part of the 50S ribosomal subunit.</text>
</comment>
<comment type="similarity">
    <text evidence="1">Belongs to the universal ribosomal protein uL24 family.</text>
</comment>
<keyword id="KW-0002">3D-structure</keyword>
<keyword id="KW-0687">Ribonucleoprotein</keyword>
<keyword id="KW-0689">Ribosomal protein</keyword>
<keyword id="KW-0694">RNA-binding</keyword>
<keyword id="KW-0699">rRNA-binding</keyword>
<evidence type="ECO:0000255" key="1">
    <source>
        <dbReference type="HAMAP-Rule" id="MF_01326"/>
    </source>
</evidence>
<evidence type="ECO:0000305" key="2"/>
<gene>
    <name evidence="1" type="primary">rplX</name>
    <name type="ordered locus">llmg_2372</name>
</gene>
<organism>
    <name type="scientific">Lactococcus lactis subsp. cremoris (strain MG1363)</name>
    <dbReference type="NCBI Taxonomy" id="416870"/>
    <lineage>
        <taxon>Bacteria</taxon>
        <taxon>Bacillati</taxon>
        <taxon>Bacillota</taxon>
        <taxon>Bacilli</taxon>
        <taxon>Lactobacillales</taxon>
        <taxon>Streptococcaceae</taxon>
        <taxon>Lactococcus</taxon>
        <taxon>Lactococcus cremoris subsp. cremoris</taxon>
    </lineage>
</organism>
<protein>
    <recommendedName>
        <fullName evidence="1">Large ribosomal subunit protein uL24</fullName>
    </recommendedName>
    <alternativeName>
        <fullName evidence="2">50S ribosomal protein L24</fullName>
    </alternativeName>
</protein>
<dbReference type="EMBL" id="AM406671">
    <property type="protein sequence ID" value="CAL98935.1"/>
    <property type="molecule type" value="Genomic_DNA"/>
</dbReference>
<dbReference type="RefSeq" id="WP_003129951.1">
    <property type="nucleotide sequence ID" value="NZ_WJVF01000005.1"/>
</dbReference>
<dbReference type="PDB" id="5MYJ">
    <property type="method" value="EM"/>
    <property type="resolution" value="5.60 A"/>
    <property type="chains" value="BX=1-101"/>
</dbReference>
<dbReference type="PDBsum" id="5MYJ"/>
<dbReference type="EMDB" id="EMD-3581"/>
<dbReference type="SMR" id="A2RNP4"/>
<dbReference type="STRING" id="416870.llmg_2372"/>
<dbReference type="GeneID" id="89634435"/>
<dbReference type="KEGG" id="llm:llmg_2372"/>
<dbReference type="eggNOG" id="COG0198">
    <property type="taxonomic scope" value="Bacteria"/>
</dbReference>
<dbReference type="HOGENOM" id="CLU_093315_2_0_9"/>
<dbReference type="OrthoDB" id="9807419at2"/>
<dbReference type="PhylomeDB" id="A2RNP4"/>
<dbReference type="Proteomes" id="UP000000364">
    <property type="component" value="Chromosome"/>
</dbReference>
<dbReference type="GO" id="GO:1990904">
    <property type="term" value="C:ribonucleoprotein complex"/>
    <property type="evidence" value="ECO:0007669"/>
    <property type="project" value="UniProtKB-KW"/>
</dbReference>
<dbReference type="GO" id="GO:0005840">
    <property type="term" value="C:ribosome"/>
    <property type="evidence" value="ECO:0007669"/>
    <property type="project" value="UniProtKB-KW"/>
</dbReference>
<dbReference type="GO" id="GO:0019843">
    <property type="term" value="F:rRNA binding"/>
    <property type="evidence" value="ECO:0007669"/>
    <property type="project" value="UniProtKB-UniRule"/>
</dbReference>
<dbReference type="GO" id="GO:0003735">
    <property type="term" value="F:structural constituent of ribosome"/>
    <property type="evidence" value="ECO:0007669"/>
    <property type="project" value="InterPro"/>
</dbReference>
<dbReference type="GO" id="GO:0006412">
    <property type="term" value="P:translation"/>
    <property type="evidence" value="ECO:0007669"/>
    <property type="project" value="UniProtKB-UniRule"/>
</dbReference>
<dbReference type="CDD" id="cd06089">
    <property type="entry name" value="KOW_RPL26"/>
    <property type="match status" value="1"/>
</dbReference>
<dbReference type="FunFam" id="2.30.30.30:FF:000004">
    <property type="entry name" value="50S ribosomal protein L24"/>
    <property type="match status" value="1"/>
</dbReference>
<dbReference type="Gene3D" id="2.30.30.30">
    <property type="match status" value="1"/>
</dbReference>
<dbReference type="HAMAP" id="MF_01326_B">
    <property type="entry name" value="Ribosomal_uL24_B"/>
    <property type="match status" value="1"/>
</dbReference>
<dbReference type="InterPro" id="IPR005824">
    <property type="entry name" value="KOW"/>
</dbReference>
<dbReference type="InterPro" id="IPR014722">
    <property type="entry name" value="Rib_uL2_dom2"/>
</dbReference>
<dbReference type="InterPro" id="IPR003256">
    <property type="entry name" value="Ribosomal_uL24"/>
</dbReference>
<dbReference type="InterPro" id="IPR005825">
    <property type="entry name" value="Ribosomal_uL24_CS"/>
</dbReference>
<dbReference type="InterPro" id="IPR041988">
    <property type="entry name" value="Ribosomal_uL24_KOW"/>
</dbReference>
<dbReference type="InterPro" id="IPR008991">
    <property type="entry name" value="Translation_prot_SH3-like_sf"/>
</dbReference>
<dbReference type="NCBIfam" id="TIGR01079">
    <property type="entry name" value="rplX_bact"/>
    <property type="match status" value="1"/>
</dbReference>
<dbReference type="PANTHER" id="PTHR12903">
    <property type="entry name" value="MITOCHONDRIAL RIBOSOMAL PROTEIN L24"/>
    <property type="match status" value="1"/>
</dbReference>
<dbReference type="Pfam" id="PF00467">
    <property type="entry name" value="KOW"/>
    <property type="match status" value="1"/>
</dbReference>
<dbReference type="Pfam" id="PF17136">
    <property type="entry name" value="ribosomal_L24"/>
    <property type="match status" value="1"/>
</dbReference>
<dbReference type="SMART" id="SM00739">
    <property type="entry name" value="KOW"/>
    <property type="match status" value="1"/>
</dbReference>
<dbReference type="SUPFAM" id="SSF50104">
    <property type="entry name" value="Translation proteins SH3-like domain"/>
    <property type="match status" value="1"/>
</dbReference>
<dbReference type="PROSITE" id="PS01108">
    <property type="entry name" value="RIBOSOMAL_L24"/>
    <property type="match status" value="1"/>
</dbReference>
<reference key="1">
    <citation type="journal article" date="2007" name="J. Bacteriol.">
        <title>The complete genome sequence of the lactic acid bacterial paradigm Lactococcus lactis subsp. cremoris MG1363.</title>
        <authorList>
            <person name="Wegmann U."/>
            <person name="O'Connell-Motherway M."/>
            <person name="Zomer A."/>
            <person name="Buist G."/>
            <person name="Shearman C."/>
            <person name="Canchaya C."/>
            <person name="Ventura M."/>
            <person name="Goesmann A."/>
            <person name="Gasson M.J."/>
            <person name="Kuipers O.P."/>
            <person name="van Sinderen D."/>
            <person name="Kok J."/>
        </authorList>
    </citation>
    <scope>NUCLEOTIDE SEQUENCE [LARGE SCALE GENOMIC DNA]</scope>
    <source>
        <strain>MG1363</strain>
    </source>
</reference>
<sequence>MFVKTGDTVKVIAGKDRGTTGKVIKALPKVNKVVVEGVAIMKKHQKPNSENPSGAILEIEAPIHVSNVQVLDKNGVAGRVGYKVVDDKKVRFNKKSGEILD</sequence>
<accession>A2RNP4</accession>